<reference key="1">
    <citation type="journal article" date="2004" name="Nature">
        <title>Genome evolution in yeasts.</title>
        <authorList>
            <person name="Dujon B."/>
            <person name="Sherman D."/>
            <person name="Fischer G."/>
            <person name="Durrens P."/>
            <person name="Casaregola S."/>
            <person name="Lafontaine I."/>
            <person name="de Montigny J."/>
            <person name="Marck C."/>
            <person name="Neuveglise C."/>
            <person name="Talla E."/>
            <person name="Goffard N."/>
            <person name="Frangeul L."/>
            <person name="Aigle M."/>
            <person name="Anthouard V."/>
            <person name="Babour A."/>
            <person name="Barbe V."/>
            <person name="Barnay S."/>
            <person name="Blanchin S."/>
            <person name="Beckerich J.-M."/>
            <person name="Beyne E."/>
            <person name="Bleykasten C."/>
            <person name="Boisrame A."/>
            <person name="Boyer J."/>
            <person name="Cattolico L."/>
            <person name="Confanioleri F."/>
            <person name="de Daruvar A."/>
            <person name="Despons L."/>
            <person name="Fabre E."/>
            <person name="Fairhead C."/>
            <person name="Ferry-Dumazet H."/>
            <person name="Groppi A."/>
            <person name="Hantraye F."/>
            <person name="Hennequin C."/>
            <person name="Jauniaux N."/>
            <person name="Joyet P."/>
            <person name="Kachouri R."/>
            <person name="Kerrest A."/>
            <person name="Koszul R."/>
            <person name="Lemaire M."/>
            <person name="Lesur I."/>
            <person name="Ma L."/>
            <person name="Muller H."/>
            <person name="Nicaud J.-M."/>
            <person name="Nikolski M."/>
            <person name="Oztas S."/>
            <person name="Ozier-Kalogeropoulos O."/>
            <person name="Pellenz S."/>
            <person name="Potier S."/>
            <person name="Richard G.-F."/>
            <person name="Straub M.-L."/>
            <person name="Suleau A."/>
            <person name="Swennen D."/>
            <person name="Tekaia F."/>
            <person name="Wesolowski-Louvel M."/>
            <person name="Westhof E."/>
            <person name="Wirth B."/>
            <person name="Zeniou-Meyer M."/>
            <person name="Zivanovic Y."/>
            <person name="Bolotin-Fukuhara M."/>
            <person name="Thierry A."/>
            <person name="Bouchier C."/>
            <person name="Caudron B."/>
            <person name="Scarpelli C."/>
            <person name="Gaillardin C."/>
            <person name="Weissenbach J."/>
            <person name="Wincker P."/>
            <person name="Souciet J.-L."/>
        </authorList>
    </citation>
    <scope>NUCLEOTIDE SEQUENCE [LARGE SCALE GENOMIC DNA]</scope>
    <source>
        <strain>ATCC 8585 / CBS 2359 / DSM 70799 / NBRC 1267 / NRRL Y-1140 / WM37</strain>
    </source>
</reference>
<accession>Q6CUI5</accession>
<comment type="function">
    <text evidence="1">Component of the cleavage factor I (CF I) involved in pre-mRNA 3'-end processing.</text>
</comment>
<comment type="subcellular location">
    <subcellularLocation>
        <location evidence="1">Nucleus</location>
    </subcellularLocation>
</comment>
<comment type="similarity">
    <text evidence="3">Belongs to the metallo-beta-lactamase superfamily. RNA-metabolizing metallo-beta-lactamase-like family. CPSF2/YSH1 subfamily.</text>
</comment>
<keyword id="KW-0255">Endonuclease</keyword>
<keyword id="KW-0378">Hydrolase</keyword>
<keyword id="KW-0479">Metal-binding</keyword>
<keyword id="KW-0507">mRNA processing</keyword>
<keyword id="KW-0540">Nuclease</keyword>
<keyword id="KW-0539">Nucleus</keyword>
<keyword id="KW-1185">Reference proteome</keyword>
<keyword id="KW-0862">Zinc</keyword>
<gene>
    <name type="primary">YSH1</name>
    <name type="ordered locus">KLLA0C04598g</name>
</gene>
<evidence type="ECO:0000250" key="1"/>
<evidence type="ECO:0000255" key="2"/>
<evidence type="ECO:0000305" key="3"/>
<protein>
    <recommendedName>
        <fullName>Endoribonuclease YSH1</fullName>
        <ecNumber>3.1.27.-</ecNumber>
    </recommendedName>
    <alternativeName>
        <fullName>mRNA 3'-end-processing protein YSH1</fullName>
    </alternativeName>
</protein>
<dbReference type="EC" id="3.1.27.-"/>
<dbReference type="EMBL" id="CR382123">
    <property type="protein sequence ID" value="CAH01255.1"/>
    <property type="molecule type" value="Genomic_DNA"/>
</dbReference>
<dbReference type="RefSeq" id="XP_452404.1">
    <property type="nucleotide sequence ID" value="XM_452404.1"/>
</dbReference>
<dbReference type="SMR" id="Q6CUI5"/>
<dbReference type="FunCoup" id="Q6CUI5">
    <property type="interactions" value="1051"/>
</dbReference>
<dbReference type="STRING" id="284590.Q6CUI5"/>
<dbReference type="PaxDb" id="284590-Q6CUI5"/>
<dbReference type="KEGG" id="kla:KLLA0_C04598g"/>
<dbReference type="eggNOG" id="KOG1137">
    <property type="taxonomic scope" value="Eukaryota"/>
</dbReference>
<dbReference type="HOGENOM" id="CLU_009673_2_3_1"/>
<dbReference type="InParanoid" id="Q6CUI5"/>
<dbReference type="OMA" id="CKQHITL"/>
<dbReference type="Proteomes" id="UP000000598">
    <property type="component" value="Chromosome C"/>
</dbReference>
<dbReference type="GO" id="GO:0005847">
    <property type="term" value="C:mRNA cleavage and polyadenylation specificity factor complex"/>
    <property type="evidence" value="ECO:0007669"/>
    <property type="project" value="TreeGrafter"/>
</dbReference>
<dbReference type="GO" id="GO:0004534">
    <property type="term" value="F:5'-3' RNA exonuclease activity"/>
    <property type="evidence" value="ECO:0007669"/>
    <property type="project" value="TreeGrafter"/>
</dbReference>
<dbReference type="GO" id="GO:0046872">
    <property type="term" value="F:metal ion binding"/>
    <property type="evidence" value="ECO:0007669"/>
    <property type="project" value="UniProtKB-KW"/>
</dbReference>
<dbReference type="GO" id="GO:0003723">
    <property type="term" value="F:RNA binding"/>
    <property type="evidence" value="ECO:0007669"/>
    <property type="project" value="TreeGrafter"/>
</dbReference>
<dbReference type="GO" id="GO:0004521">
    <property type="term" value="F:RNA endonuclease activity"/>
    <property type="evidence" value="ECO:0007669"/>
    <property type="project" value="TreeGrafter"/>
</dbReference>
<dbReference type="GO" id="GO:0006397">
    <property type="term" value="P:mRNA processing"/>
    <property type="evidence" value="ECO:0007669"/>
    <property type="project" value="UniProtKB-KW"/>
</dbReference>
<dbReference type="CDD" id="cd16292">
    <property type="entry name" value="CPSF3-like_MBL-fold"/>
    <property type="match status" value="1"/>
</dbReference>
<dbReference type="FunFam" id="3.60.15.10:FF:000001">
    <property type="entry name" value="Cleavage and polyadenylation specificity factor"/>
    <property type="match status" value="1"/>
</dbReference>
<dbReference type="FunFam" id="3.40.50.10890:FF:000001">
    <property type="entry name" value="Cleavage and polyadenylation specificity factor subunit 3"/>
    <property type="match status" value="1"/>
</dbReference>
<dbReference type="Gene3D" id="3.40.50.10890">
    <property type="match status" value="1"/>
</dbReference>
<dbReference type="Gene3D" id="3.60.15.10">
    <property type="entry name" value="Ribonuclease Z/Hydroxyacylglutathione hydrolase-like"/>
    <property type="match status" value="1"/>
</dbReference>
<dbReference type="InterPro" id="IPR022712">
    <property type="entry name" value="Beta_Casp"/>
</dbReference>
<dbReference type="InterPro" id="IPR021718">
    <property type="entry name" value="CPSF73-100_C"/>
</dbReference>
<dbReference type="InterPro" id="IPR050698">
    <property type="entry name" value="MBL"/>
</dbReference>
<dbReference type="InterPro" id="IPR001279">
    <property type="entry name" value="Metallo-B-lactamas"/>
</dbReference>
<dbReference type="InterPro" id="IPR036866">
    <property type="entry name" value="RibonucZ/Hydroxyglut_hydro"/>
</dbReference>
<dbReference type="InterPro" id="IPR011108">
    <property type="entry name" value="RMMBL"/>
</dbReference>
<dbReference type="PANTHER" id="PTHR11203">
    <property type="entry name" value="CLEAVAGE AND POLYADENYLATION SPECIFICITY FACTOR FAMILY MEMBER"/>
    <property type="match status" value="1"/>
</dbReference>
<dbReference type="PANTHER" id="PTHR11203:SF11">
    <property type="entry name" value="CLEAVAGE AND POLYADENYLATION SPECIFICITY FACTOR SUBUNIT 3"/>
    <property type="match status" value="1"/>
</dbReference>
<dbReference type="Pfam" id="PF10996">
    <property type="entry name" value="Beta-Casp"/>
    <property type="match status" value="1"/>
</dbReference>
<dbReference type="Pfam" id="PF11718">
    <property type="entry name" value="CPSF73-100_C"/>
    <property type="match status" value="1"/>
</dbReference>
<dbReference type="Pfam" id="PF16661">
    <property type="entry name" value="Lactamase_B_6"/>
    <property type="match status" value="1"/>
</dbReference>
<dbReference type="Pfam" id="PF07521">
    <property type="entry name" value="RMMBL"/>
    <property type="match status" value="1"/>
</dbReference>
<dbReference type="SMART" id="SM01027">
    <property type="entry name" value="Beta-Casp"/>
    <property type="match status" value="1"/>
</dbReference>
<dbReference type="SMART" id="SM01098">
    <property type="entry name" value="CPSF73-100_C"/>
    <property type="match status" value="1"/>
</dbReference>
<dbReference type="SMART" id="SM00849">
    <property type="entry name" value="Lactamase_B"/>
    <property type="match status" value="1"/>
</dbReference>
<dbReference type="SUPFAM" id="SSF56281">
    <property type="entry name" value="Metallo-hydrolase/oxidoreductase"/>
    <property type="match status" value="1"/>
</dbReference>
<organism>
    <name type="scientific">Kluyveromyces lactis (strain ATCC 8585 / CBS 2359 / DSM 70799 / NBRC 1267 / NRRL Y-1140 / WM37)</name>
    <name type="common">Yeast</name>
    <name type="synonym">Candida sphaerica</name>
    <dbReference type="NCBI Taxonomy" id="284590"/>
    <lineage>
        <taxon>Eukaryota</taxon>
        <taxon>Fungi</taxon>
        <taxon>Dikarya</taxon>
        <taxon>Ascomycota</taxon>
        <taxon>Saccharomycotina</taxon>
        <taxon>Saccharomycetes</taxon>
        <taxon>Saccharomycetales</taxon>
        <taxon>Saccharomycetaceae</taxon>
        <taxon>Kluyveromyces</taxon>
    </lineage>
</organism>
<name>YSH1_KLULA</name>
<feature type="chain" id="PRO_0000238904" description="Endoribonuclease YSH1">
    <location>
        <begin position="1"/>
        <end position="764"/>
    </location>
</feature>
<feature type="active site" description="Proton donor" evidence="2">
    <location>
        <position position="412"/>
    </location>
</feature>
<feature type="binding site" evidence="1">
    <location>
        <position position="73"/>
    </location>
    <ligand>
        <name>Zn(2+)</name>
        <dbReference type="ChEBI" id="CHEBI:29105"/>
        <label>1</label>
    </ligand>
</feature>
<feature type="binding site" evidence="1">
    <location>
        <position position="75"/>
    </location>
    <ligand>
        <name>Zn(2+)</name>
        <dbReference type="ChEBI" id="CHEBI:29105"/>
        <label>1</label>
    </ligand>
</feature>
<feature type="binding site" evidence="1">
    <location>
        <position position="77"/>
    </location>
    <ligand>
        <name>Zn(2+)</name>
        <dbReference type="ChEBI" id="CHEBI:29105"/>
        <label>2</label>
    </ligand>
</feature>
<feature type="binding site" evidence="1">
    <location>
        <position position="78"/>
    </location>
    <ligand>
        <name>Zn(2+)</name>
        <dbReference type="ChEBI" id="CHEBI:29105"/>
        <label>2</label>
    </ligand>
</feature>
<feature type="binding site" evidence="1">
    <location>
        <position position="167"/>
    </location>
    <ligand>
        <name>Zn(2+)</name>
        <dbReference type="ChEBI" id="CHEBI:29105"/>
        <label>1</label>
    </ligand>
</feature>
<feature type="binding site" evidence="1">
    <location>
        <position position="188"/>
    </location>
    <ligand>
        <name>Zn(2+)</name>
        <dbReference type="ChEBI" id="CHEBI:29105"/>
        <label>1</label>
    </ligand>
</feature>
<feature type="binding site" evidence="1">
    <location>
        <position position="188"/>
    </location>
    <ligand>
        <name>Zn(2+)</name>
        <dbReference type="ChEBI" id="CHEBI:29105"/>
        <label>2</label>
    </ligand>
</feature>
<feature type="binding site" evidence="1">
    <location>
        <position position="434"/>
    </location>
    <ligand>
        <name>Zn(2+)</name>
        <dbReference type="ChEBI" id="CHEBI:29105"/>
        <label>2</label>
    </ligand>
</feature>
<proteinExistence type="inferred from homology"/>
<sequence length="764" mass="86417">MTQLENEVPDKDHLRFFSLGGSNEVGRSCHILQYKGKTLMLDAGIHPAHQGLASLPYYDEFDLSTIDLLLISHFHLDHAASLPYVMQRTNFRGRVFMTHPTKAIYRWLLNDFVKVTSIGDSPGQDSSNDNLYSDEDLAESFDRIETIDYHSTMEVNGIKFTAFHAGHVLGAAMFQIEIAGVRVLFTGDYSREVDRHLNSAEVPPQSSDVIIVESTFGTATHEPRQNRERKLTQLIHTVVSKGGRVLLPVFALGRAQEIMLILDEYWQNHKEELGNGQVPIFYASNLAKKCMSVFQTYVNMMNDDIRKKFKDSQTNPFIFKNISYLKNLDEFEDFGPSVMLASPGMLQNGLSRDILEKWCPEEKNLVLVTGYSVEGTMAKYLLLEPEAIPSVHNPEITIPRRCQVDEITFAAHVDFRENLEFIELIGASNIILVHGESNPMGRLKSALLSNFSSLKDTENEVHVFNPRNCVFVDIEFKDVKVARAVGKIIEDLDEFITEEDALKNEKRITEIHEEDPETEESKTEIVKEENEKIVSGILVSDEKNFDLSLVSLSDLREHYQQLSTTVLTERQTVHLDCKSELVYWHICQMFGDVDVYIDEENVSLKNINPEFKTRKIKKGELEIKIMGDVILNIVDNVATLQWTQNVISDSVADSVMAILLSVESAPASIKMSSKSCGHHHGHDDHTTKIKNISRVFKEQFGDTFTLFLNEEDSKEEIKGTINLGKTTACINFSKMVVEECNSNPLKGRIESLLKIGSDLVAPLC</sequence>